<protein>
    <recommendedName>
        <fullName evidence="1">4-hydroxy-3-methylbut-2-en-1-yl diphosphate synthase (flavodoxin)</fullName>
        <ecNumber evidence="1">1.17.7.3</ecNumber>
    </recommendedName>
    <alternativeName>
        <fullName evidence="1">1-hydroxy-2-methyl-2-(E)-butenyl 4-diphosphate synthase</fullName>
    </alternativeName>
</protein>
<evidence type="ECO:0000255" key="1">
    <source>
        <dbReference type="HAMAP-Rule" id="MF_00159"/>
    </source>
</evidence>
<organism>
    <name type="scientific">Campylobacter fetus subsp. fetus (strain 82-40)</name>
    <dbReference type="NCBI Taxonomy" id="360106"/>
    <lineage>
        <taxon>Bacteria</taxon>
        <taxon>Pseudomonadati</taxon>
        <taxon>Campylobacterota</taxon>
        <taxon>Epsilonproteobacteria</taxon>
        <taxon>Campylobacterales</taxon>
        <taxon>Campylobacteraceae</taxon>
        <taxon>Campylobacter</taxon>
    </lineage>
</organism>
<feature type="chain" id="PRO_1000071538" description="4-hydroxy-3-methylbut-2-en-1-yl diphosphate synthase (flavodoxin)">
    <location>
        <begin position="1"/>
        <end position="356"/>
    </location>
</feature>
<feature type="binding site" evidence="1">
    <location>
        <position position="262"/>
    </location>
    <ligand>
        <name>[4Fe-4S] cluster</name>
        <dbReference type="ChEBI" id="CHEBI:49883"/>
    </ligand>
</feature>
<feature type="binding site" evidence="1">
    <location>
        <position position="265"/>
    </location>
    <ligand>
        <name>[4Fe-4S] cluster</name>
        <dbReference type="ChEBI" id="CHEBI:49883"/>
    </ligand>
</feature>
<feature type="binding site" evidence="1">
    <location>
        <position position="297"/>
    </location>
    <ligand>
        <name>[4Fe-4S] cluster</name>
        <dbReference type="ChEBI" id="CHEBI:49883"/>
    </ligand>
</feature>
<feature type="binding site" evidence="1">
    <location>
        <position position="304"/>
    </location>
    <ligand>
        <name>[4Fe-4S] cluster</name>
        <dbReference type="ChEBI" id="CHEBI:49883"/>
    </ligand>
</feature>
<comment type="function">
    <text evidence="1">Converts 2C-methyl-D-erythritol 2,4-cyclodiphosphate (ME-2,4cPP) into 1-hydroxy-2-methyl-2-(E)-butenyl 4-diphosphate.</text>
</comment>
<comment type="catalytic activity">
    <reaction evidence="1">
        <text>(2E)-4-hydroxy-3-methylbut-2-enyl diphosphate + oxidized [flavodoxin] + H2O + 2 H(+) = 2-C-methyl-D-erythritol 2,4-cyclic diphosphate + reduced [flavodoxin]</text>
        <dbReference type="Rhea" id="RHEA:43604"/>
        <dbReference type="Rhea" id="RHEA-COMP:10622"/>
        <dbReference type="Rhea" id="RHEA-COMP:10623"/>
        <dbReference type="ChEBI" id="CHEBI:15377"/>
        <dbReference type="ChEBI" id="CHEBI:15378"/>
        <dbReference type="ChEBI" id="CHEBI:57618"/>
        <dbReference type="ChEBI" id="CHEBI:58210"/>
        <dbReference type="ChEBI" id="CHEBI:58483"/>
        <dbReference type="ChEBI" id="CHEBI:128753"/>
        <dbReference type="EC" id="1.17.7.3"/>
    </reaction>
</comment>
<comment type="cofactor">
    <cofactor evidence="1">
        <name>[4Fe-4S] cluster</name>
        <dbReference type="ChEBI" id="CHEBI:49883"/>
    </cofactor>
    <text evidence="1">Binds 1 [4Fe-4S] cluster.</text>
</comment>
<comment type="pathway">
    <text evidence="1">Isoprenoid biosynthesis; isopentenyl diphosphate biosynthesis via DXP pathway; isopentenyl diphosphate from 1-deoxy-D-xylulose 5-phosphate: step 5/6.</text>
</comment>
<comment type="similarity">
    <text evidence="1">Belongs to the IspG family.</text>
</comment>
<name>ISPG_CAMFF</name>
<gene>
    <name evidence="1" type="primary">ispG</name>
    <name type="ordered locus">CFF8240_0983</name>
</gene>
<accession>A0RPL8</accession>
<dbReference type="EC" id="1.17.7.3" evidence="1"/>
<dbReference type="EMBL" id="CP000487">
    <property type="protein sequence ID" value="ABK82969.1"/>
    <property type="molecule type" value="Genomic_DNA"/>
</dbReference>
<dbReference type="RefSeq" id="WP_002849534.1">
    <property type="nucleotide sequence ID" value="NC_008599.1"/>
</dbReference>
<dbReference type="SMR" id="A0RPL8"/>
<dbReference type="GeneID" id="61064813"/>
<dbReference type="KEGG" id="cff:CFF8240_0983"/>
<dbReference type="eggNOG" id="COG0821">
    <property type="taxonomic scope" value="Bacteria"/>
</dbReference>
<dbReference type="HOGENOM" id="CLU_042258_0_0_7"/>
<dbReference type="UniPathway" id="UPA00056">
    <property type="reaction ID" value="UER00096"/>
</dbReference>
<dbReference type="Proteomes" id="UP000000760">
    <property type="component" value="Chromosome"/>
</dbReference>
<dbReference type="GO" id="GO:0051539">
    <property type="term" value="F:4 iron, 4 sulfur cluster binding"/>
    <property type="evidence" value="ECO:0007669"/>
    <property type="project" value="UniProtKB-UniRule"/>
</dbReference>
<dbReference type="GO" id="GO:0046429">
    <property type="term" value="F:4-hydroxy-3-methylbut-2-en-1-yl diphosphate synthase activity (ferredoxin)"/>
    <property type="evidence" value="ECO:0007669"/>
    <property type="project" value="UniProtKB-UniRule"/>
</dbReference>
<dbReference type="GO" id="GO:0141197">
    <property type="term" value="F:4-hydroxy-3-methylbut-2-enyl-diphosphate synthase activity (flavodoxin)"/>
    <property type="evidence" value="ECO:0007669"/>
    <property type="project" value="UniProtKB-EC"/>
</dbReference>
<dbReference type="GO" id="GO:0005506">
    <property type="term" value="F:iron ion binding"/>
    <property type="evidence" value="ECO:0007669"/>
    <property type="project" value="InterPro"/>
</dbReference>
<dbReference type="GO" id="GO:0019288">
    <property type="term" value="P:isopentenyl diphosphate biosynthetic process, methylerythritol 4-phosphate pathway"/>
    <property type="evidence" value="ECO:0007669"/>
    <property type="project" value="UniProtKB-UniRule"/>
</dbReference>
<dbReference type="GO" id="GO:0016114">
    <property type="term" value="P:terpenoid biosynthetic process"/>
    <property type="evidence" value="ECO:0007669"/>
    <property type="project" value="InterPro"/>
</dbReference>
<dbReference type="FunFam" id="3.20.20.20:FF:000001">
    <property type="entry name" value="4-hydroxy-3-methylbut-2-en-1-yl diphosphate synthase (flavodoxin)"/>
    <property type="match status" value="1"/>
</dbReference>
<dbReference type="Gene3D" id="3.20.20.20">
    <property type="entry name" value="Dihydropteroate synthase-like"/>
    <property type="match status" value="1"/>
</dbReference>
<dbReference type="Gene3D" id="3.30.413.10">
    <property type="entry name" value="Sulfite Reductase Hemoprotein, domain 1"/>
    <property type="match status" value="1"/>
</dbReference>
<dbReference type="HAMAP" id="MF_00159">
    <property type="entry name" value="IspG"/>
    <property type="match status" value="1"/>
</dbReference>
<dbReference type="InterPro" id="IPR011005">
    <property type="entry name" value="Dihydropteroate_synth-like_sf"/>
</dbReference>
<dbReference type="InterPro" id="IPR016425">
    <property type="entry name" value="IspG_bac"/>
</dbReference>
<dbReference type="InterPro" id="IPR004588">
    <property type="entry name" value="IspG_bac-typ"/>
</dbReference>
<dbReference type="InterPro" id="IPR045854">
    <property type="entry name" value="NO2/SO3_Rdtase_4Fe4S_sf"/>
</dbReference>
<dbReference type="NCBIfam" id="TIGR00612">
    <property type="entry name" value="ispG_gcpE"/>
    <property type="match status" value="1"/>
</dbReference>
<dbReference type="NCBIfam" id="NF001540">
    <property type="entry name" value="PRK00366.1"/>
    <property type="match status" value="1"/>
</dbReference>
<dbReference type="PANTHER" id="PTHR30454">
    <property type="entry name" value="4-HYDROXY-3-METHYLBUT-2-EN-1-YL DIPHOSPHATE SYNTHASE"/>
    <property type="match status" value="1"/>
</dbReference>
<dbReference type="PANTHER" id="PTHR30454:SF0">
    <property type="entry name" value="4-HYDROXY-3-METHYLBUT-2-EN-1-YL DIPHOSPHATE SYNTHASE (FERREDOXIN), CHLOROPLASTIC"/>
    <property type="match status" value="1"/>
</dbReference>
<dbReference type="Pfam" id="PF04551">
    <property type="entry name" value="GcpE"/>
    <property type="match status" value="1"/>
</dbReference>
<dbReference type="PIRSF" id="PIRSF004640">
    <property type="entry name" value="IspG"/>
    <property type="match status" value="1"/>
</dbReference>
<dbReference type="SUPFAM" id="SSF51717">
    <property type="entry name" value="Dihydropteroate synthetase-like"/>
    <property type="match status" value="1"/>
</dbReference>
<dbReference type="SUPFAM" id="SSF56014">
    <property type="entry name" value="Nitrite and sulphite reductase 4Fe-4S domain-like"/>
    <property type="match status" value="1"/>
</dbReference>
<sequence length="356" mass="38947">MQRYPTKQILVGNVKIGGDAPISVQSMTFAKTRDVKECLEQINRLYFAGCDIVRCAVFNKEDIVGLEQVKKESPLPIVADIHFNYSYAVAVSKFVDAIRINPGNIGGKDRIKAVVEACKERNIPIRIGVNSGSLEEQFENKYGRSVKGMVQSALYNIGLLEELEFTDIAVSLKSSDVYNTMQAYRELRPFTSYPFHLGVTEAGTTFHATIKSAIALGGLLLEGIGDTMRVSITGELEEEIKVARAILQDTGLQKSGLNIISCPTCGRLQSDLVSAIKIVEEKTKHIKEPLNVSVMGCVVNAIGEAKGADVAIAFGKGNGLVMRHGEVVARLKEHELVDRFLSEIDDEIKQRASNNG</sequence>
<proteinExistence type="inferred from homology"/>
<reference key="1">
    <citation type="submission" date="2006-11" db="EMBL/GenBank/DDBJ databases">
        <title>Sequence of Campylobacter fetus subsp. fetus 82-40.</title>
        <authorList>
            <person name="Fouts D.E."/>
            <person name="Nelson K.E."/>
        </authorList>
    </citation>
    <scope>NUCLEOTIDE SEQUENCE [LARGE SCALE GENOMIC DNA]</scope>
    <source>
        <strain>82-40</strain>
    </source>
</reference>
<keyword id="KW-0004">4Fe-4S</keyword>
<keyword id="KW-0408">Iron</keyword>
<keyword id="KW-0411">Iron-sulfur</keyword>
<keyword id="KW-0414">Isoprene biosynthesis</keyword>
<keyword id="KW-0479">Metal-binding</keyword>
<keyword id="KW-0560">Oxidoreductase</keyword>